<comment type="function">
    <text evidence="1">Endonuclease that specifically degrades the RNA of RNA-DNA hybrids.</text>
</comment>
<comment type="catalytic activity">
    <reaction evidence="1">
        <text>Endonucleolytic cleavage to 5'-phosphomonoester.</text>
        <dbReference type="EC" id="3.1.26.4"/>
    </reaction>
</comment>
<comment type="cofactor">
    <cofactor evidence="1">
        <name>Mg(2+)</name>
        <dbReference type="ChEBI" id="CHEBI:18420"/>
    </cofactor>
    <text evidence="1">Binds 1 Mg(2+) ion per subunit. May bind a second metal ion at a regulatory site, or after substrate binding.</text>
</comment>
<comment type="subunit">
    <text evidence="1">Monomer.</text>
</comment>
<comment type="subcellular location">
    <subcellularLocation>
        <location evidence="1">Cytoplasm</location>
    </subcellularLocation>
</comment>
<comment type="similarity">
    <text evidence="1">Belongs to the RNase H family.</text>
</comment>
<protein>
    <recommendedName>
        <fullName evidence="1">Ribonuclease H</fullName>
        <shortName evidence="1">RNase H</shortName>
        <ecNumber evidence="1">3.1.26.4</ecNumber>
    </recommendedName>
</protein>
<gene>
    <name evidence="1" type="primary">rnhA</name>
    <name type="ordered locus">Reut_A2189</name>
</gene>
<accession>Q46Z81</accession>
<name>RNH_CUPPJ</name>
<sequence length="145" mass="15981">MQEVIIYSDGACKGNPGRGGWGAVLVAGTNEKELFGGEANTTNNRMEMTAVIEALRALKRPCTVQVYTDSQYVQKGISEWLPGWKARGWKTADKKPVKNADLWQELDTLVQPHKITWHWVRGHNGHPGNERADALANRGVASLAS</sequence>
<organism>
    <name type="scientific">Cupriavidus pinatubonensis (strain JMP 134 / LMG 1197)</name>
    <name type="common">Cupriavidus necator (strain JMP 134)</name>
    <dbReference type="NCBI Taxonomy" id="264198"/>
    <lineage>
        <taxon>Bacteria</taxon>
        <taxon>Pseudomonadati</taxon>
        <taxon>Pseudomonadota</taxon>
        <taxon>Betaproteobacteria</taxon>
        <taxon>Burkholderiales</taxon>
        <taxon>Burkholderiaceae</taxon>
        <taxon>Cupriavidus</taxon>
    </lineage>
</organism>
<proteinExistence type="inferred from homology"/>
<reference key="1">
    <citation type="journal article" date="2010" name="PLoS ONE">
        <title>The complete multipartite genome sequence of Cupriavidus necator JMP134, a versatile pollutant degrader.</title>
        <authorList>
            <person name="Lykidis A."/>
            <person name="Perez-Pantoja D."/>
            <person name="Ledger T."/>
            <person name="Mavromatis K."/>
            <person name="Anderson I.J."/>
            <person name="Ivanova N.N."/>
            <person name="Hooper S.D."/>
            <person name="Lapidus A."/>
            <person name="Lucas S."/>
            <person name="Gonzalez B."/>
            <person name="Kyrpides N.C."/>
        </authorList>
    </citation>
    <scope>NUCLEOTIDE SEQUENCE [LARGE SCALE GENOMIC DNA]</scope>
    <source>
        <strain>JMP134 / LMG 1197</strain>
    </source>
</reference>
<dbReference type="EC" id="3.1.26.4" evidence="1"/>
<dbReference type="EMBL" id="CP000090">
    <property type="protein sequence ID" value="AAZ61552.1"/>
    <property type="molecule type" value="Genomic_DNA"/>
</dbReference>
<dbReference type="SMR" id="Q46Z81"/>
<dbReference type="STRING" id="264198.Reut_A2189"/>
<dbReference type="KEGG" id="reu:Reut_A2189"/>
<dbReference type="eggNOG" id="COG0328">
    <property type="taxonomic scope" value="Bacteria"/>
</dbReference>
<dbReference type="HOGENOM" id="CLU_030894_6_0_4"/>
<dbReference type="OrthoDB" id="7845843at2"/>
<dbReference type="GO" id="GO:0005737">
    <property type="term" value="C:cytoplasm"/>
    <property type="evidence" value="ECO:0007669"/>
    <property type="project" value="UniProtKB-SubCell"/>
</dbReference>
<dbReference type="GO" id="GO:0000287">
    <property type="term" value="F:magnesium ion binding"/>
    <property type="evidence" value="ECO:0007669"/>
    <property type="project" value="UniProtKB-UniRule"/>
</dbReference>
<dbReference type="GO" id="GO:0003676">
    <property type="term" value="F:nucleic acid binding"/>
    <property type="evidence" value="ECO:0007669"/>
    <property type="project" value="InterPro"/>
</dbReference>
<dbReference type="GO" id="GO:0004523">
    <property type="term" value="F:RNA-DNA hybrid ribonuclease activity"/>
    <property type="evidence" value="ECO:0007669"/>
    <property type="project" value="UniProtKB-UniRule"/>
</dbReference>
<dbReference type="GO" id="GO:0043137">
    <property type="term" value="P:DNA replication, removal of RNA primer"/>
    <property type="evidence" value="ECO:0007669"/>
    <property type="project" value="TreeGrafter"/>
</dbReference>
<dbReference type="CDD" id="cd09278">
    <property type="entry name" value="RNase_HI_prokaryote_like"/>
    <property type="match status" value="1"/>
</dbReference>
<dbReference type="FunFam" id="3.30.420.10:FF:000089">
    <property type="entry name" value="Ribonuclease H"/>
    <property type="match status" value="1"/>
</dbReference>
<dbReference type="Gene3D" id="3.30.420.10">
    <property type="entry name" value="Ribonuclease H-like superfamily/Ribonuclease H"/>
    <property type="match status" value="1"/>
</dbReference>
<dbReference type="HAMAP" id="MF_00042">
    <property type="entry name" value="RNase_H"/>
    <property type="match status" value="1"/>
</dbReference>
<dbReference type="InterPro" id="IPR050092">
    <property type="entry name" value="RNase_H"/>
</dbReference>
<dbReference type="InterPro" id="IPR012337">
    <property type="entry name" value="RNaseH-like_sf"/>
</dbReference>
<dbReference type="InterPro" id="IPR002156">
    <property type="entry name" value="RNaseH_domain"/>
</dbReference>
<dbReference type="InterPro" id="IPR036397">
    <property type="entry name" value="RNaseH_sf"/>
</dbReference>
<dbReference type="InterPro" id="IPR022892">
    <property type="entry name" value="RNaseHI"/>
</dbReference>
<dbReference type="NCBIfam" id="NF001236">
    <property type="entry name" value="PRK00203.1"/>
    <property type="match status" value="1"/>
</dbReference>
<dbReference type="PANTHER" id="PTHR10642">
    <property type="entry name" value="RIBONUCLEASE H1"/>
    <property type="match status" value="1"/>
</dbReference>
<dbReference type="PANTHER" id="PTHR10642:SF26">
    <property type="entry name" value="RIBONUCLEASE H1"/>
    <property type="match status" value="1"/>
</dbReference>
<dbReference type="Pfam" id="PF00075">
    <property type="entry name" value="RNase_H"/>
    <property type="match status" value="1"/>
</dbReference>
<dbReference type="SUPFAM" id="SSF53098">
    <property type="entry name" value="Ribonuclease H-like"/>
    <property type="match status" value="1"/>
</dbReference>
<dbReference type="PROSITE" id="PS50879">
    <property type="entry name" value="RNASE_H_1"/>
    <property type="match status" value="1"/>
</dbReference>
<feature type="chain" id="PRO_0000332659" description="Ribonuclease H">
    <location>
        <begin position="1"/>
        <end position="145"/>
    </location>
</feature>
<feature type="domain" description="RNase H type-1" evidence="2">
    <location>
        <begin position="1"/>
        <end position="141"/>
    </location>
</feature>
<feature type="binding site" evidence="1">
    <location>
        <position position="9"/>
    </location>
    <ligand>
        <name>Mg(2+)</name>
        <dbReference type="ChEBI" id="CHEBI:18420"/>
        <label>1</label>
    </ligand>
</feature>
<feature type="binding site" evidence="1">
    <location>
        <position position="9"/>
    </location>
    <ligand>
        <name>Mg(2+)</name>
        <dbReference type="ChEBI" id="CHEBI:18420"/>
        <label>2</label>
    </ligand>
</feature>
<feature type="binding site" evidence="1">
    <location>
        <position position="47"/>
    </location>
    <ligand>
        <name>Mg(2+)</name>
        <dbReference type="ChEBI" id="CHEBI:18420"/>
        <label>1</label>
    </ligand>
</feature>
<feature type="binding site" evidence="1">
    <location>
        <position position="69"/>
    </location>
    <ligand>
        <name>Mg(2+)</name>
        <dbReference type="ChEBI" id="CHEBI:18420"/>
        <label>1</label>
    </ligand>
</feature>
<feature type="binding site" evidence="1">
    <location>
        <position position="133"/>
    </location>
    <ligand>
        <name>Mg(2+)</name>
        <dbReference type="ChEBI" id="CHEBI:18420"/>
        <label>2</label>
    </ligand>
</feature>
<evidence type="ECO:0000255" key="1">
    <source>
        <dbReference type="HAMAP-Rule" id="MF_00042"/>
    </source>
</evidence>
<evidence type="ECO:0000255" key="2">
    <source>
        <dbReference type="PROSITE-ProRule" id="PRU00408"/>
    </source>
</evidence>
<keyword id="KW-0963">Cytoplasm</keyword>
<keyword id="KW-0255">Endonuclease</keyword>
<keyword id="KW-0378">Hydrolase</keyword>
<keyword id="KW-0460">Magnesium</keyword>
<keyword id="KW-0479">Metal-binding</keyword>
<keyword id="KW-0540">Nuclease</keyword>